<sequence length="95" mass="10141">MNIRPLGDRVVIKRVEAEETTKSGIVLPGAAKEKPQVAEVIAVGPGGLVDGKEVKMELKVGDKVLFSKYAGNEVKIEGEEVTILKQDDILAVVEG</sequence>
<keyword id="KW-0143">Chaperone</keyword>
<keyword id="KW-0963">Cytoplasm</keyword>
<reference key="1">
    <citation type="journal article" date="2007" name="PLoS ONE">
        <title>Analysis of the neurotoxin complex genes in Clostridium botulinum A1-A4 and B1 strains: BoNT/A3, /Ba4 and /B1 clusters are located within plasmids.</title>
        <authorList>
            <person name="Smith T.J."/>
            <person name="Hill K.K."/>
            <person name="Foley B.T."/>
            <person name="Detter J.C."/>
            <person name="Munk A.C."/>
            <person name="Bruce D.C."/>
            <person name="Doggett N.A."/>
            <person name="Smith L.A."/>
            <person name="Marks J.D."/>
            <person name="Xie G."/>
            <person name="Brettin T.S."/>
        </authorList>
    </citation>
    <scope>NUCLEOTIDE SEQUENCE [LARGE SCALE GENOMIC DNA]</scope>
    <source>
        <strain>Okra / Type B1</strain>
    </source>
</reference>
<organism>
    <name type="scientific">Clostridium botulinum (strain Okra / Type B1)</name>
    <dbReference type="NCBI Taxonomy" id="498213"/>
    <lineage>
        <taxon>Bacteria</taxon>
        <taxon>Bacillati</taxon>
        <taxon>Bacillota</taxon>
        <taxon>Clostridia</taxon>
        <taxon>Eubacteriales</taxon>
        <taxon>Clostridiaceae</taxon>
        <taxon>Clostridium</taxon>
    </lineage>
</organism>
<dbReference type="EMBL" id="CP000939">
    <property type="protein sequence ID" value="ACA43924.1"/>
    <property type="molecule type" value="Genomic_DNA"/>
</dbReference>
<dbReference type="RefSeq" id="WP_003357350.1">
    <property type="nucleotide sequence ID" value="NC_010516.1"/>
</dbReference>
<dbReference type="SMR" id="B1IFD5"/>
<dbReference type="KEGG" id="cbb:CLD_1224"/>
<dbReference type="HOGENOM" id="CLU_132825_2_0_9"/>
<dbReference type="Proteomes" id="UP000008541">
    <property type="component" value="Chromosome"/>
</dbReference>
<dbReference type="GO" id="GO:0005737">
    <property type="term" value="C:cytoplasm"/>
    <property type="evidence" value="ECO:0007669"/>
    <property type="project" value="UniProtKB-SubCell"/>
</dbReference>
<dbReference type="GO" id="GO:0005524">
    <property type="term" value="F:ATP binding"/>
    <property type="evidence" value="ECO:0007669"/>
    <property type="project" value="InterPro"/>
</dbReference>
<dbReference type="GO" id="GO:0046872">
    <property type="term" value="F:metal ion binding"/>
    <property type="evidence" value="ECO:0007669"/>
    <property type="project" value="TreeGrafter"/>
</dbReference>
<dbReference type="GO" id="GO:0044183">
    <property type="term" value="F:protein folding chaperone"/>
    <property type="evidence" value="ECO:0007669"/>
    <property type="project" value="InterPro"/>
</dbReference>
<dbReference type="GO" id="GO:0051087">
    <property type="term" value="F:protein-folding chaperone binding"/>
    <property type="evidence" value="ECO:0007669"/>
    <property type="project" value="TreeGrafter"/>
</dbReference>
<dbReference type="GO" id="GO:0051082">
    <property type="term" value="F:unfolded protein binding"/>
    <property type="evidence" value="ECO:0007669"/>
    <property type="project" value="TreeGrafter"/>
</dbReference>
<dbReference type="GO" id="GO:0051085">
    <property type="term" value="P:chaperone cofactor-dependent protein refolding"/>
    <property type="evidence" value="ECO:0007669"/>
    <property type="project" value="TreeGrafter"/>
</dbReference>
<dbReference type="CDD" id="cd00320">
    <property type="entry name" value="cpn10"/>
    <property type="match status" value="1"/>
</dbReference>
<dbReference type="FunFam" id="2.30.33.40:FF:000001">
    <property type="entry name" value="10 kDa chaperonin"/>
    <property type="match status" value="1"/>
</dbReference>
<dbReference type="Gene3D" id="2.30.33.40">
    <property type="entry name" value="GroES chaperonin"/>
    <property type="match status" value="1"/>
</dbReference>
<dbReference type="HAMAP" id="MF_00580">
    <property type="entry name" value="CH10"/>
    <property type="match status" value="1"/>
</dbReference>
<dbReference type="InterPro" id="IPR020818">
    <property type="entry name" value="Chaperonin_GroES"/>
</dbReference>
<dbReference type="InterPro" id="IPR037124">
    <property type="entry name" value="Chaperonin_GroES_sf"/>
</dbReference>
<dbReference type="InterPro" id="IPR018369">
    <property type="entry name" value="Chaprnonin_Cpn10_CS"/>
</dbReference>
<dbReference type="InterPro" id="IPR011032">
    <property type="entry name" value="GroES-like_sf"/>
</dbReference>
<dbReference type="NCBIfam" id="NF001527">
    <property type="entry name" value="PRK00364.1-2"/>
    <property type="match status" value="1"/>
</dbReference>
<dbReference type="NCBIfam" id="NF001531">
    <property type="entry name" value="PRK00364.2-2"/>
    <property type="match status" value="1"/>
</dbReference>
<dbReference type="NCBIfam" id="NF001533">
    <property type="entry name" value="PRK00364.2-4"/>
    <property type="match status" value="1"/>
</dbReference>
<dbReference type="PANTHER" id="PTHR10772">
    <property type="entry name" value="10 KDA HEAT SHOCK PROTEIN"/>
    <property type="match status" value="1"/>
</dbReference>
<dbReference type="PANTHER" id="PTHR10772:SF58">
    <property type="entry name" value="CO-CHAPERONIN GROES"/>
    <property type="match status" value="1"/>
</dbReference>
<dbReference type="Pfam" id="PF00166">
    <property type="entry name" value="Cpn10"/>
    <property type="match status" value="1"/>
</dbReference>
<dbReference type="PRINTS" id="PR00297">
    <property type="entry name" value="CHAPERONIN10"/>
</dbReference>
<dbReference type="SMART" id="SM00883">
    <property type="entry name" value="Cpn10"/>
    <property type="match status" value="1"/>
</dbReference>
<dbReference type="SUPFAM" id="SSF50129">
    <property type="entry name" value="GroES-like"/>
    <property type="match status" value="1"/>
</dbReference>
<dbReference type="PROSITE" id="PS00681">
    <property type="entry name" value="CHAPERONINS_CPN10"/>
    <property type="match status" value="1"/>
</dbReference>
<name>CH10_CLOBK</name>
<gene>
    <name evidence="1" type="primary">groES</name>
    <name evidence="1" type="synonym">groS</name>
    <name type="ordered locus">CLD_1224</name>
</gene>
<evidence type="ECO:0000255" key="1">
    <source>
        <dbReference type="HAMAP-Rule" id="MF_00580"/>
    </source>
</evidence>
<proteinExistence type="inferred from homology"/>
<feature type="chain" id="PRO_1000129642" description="Co-chaperonin GroES">
    <location>
        <begin position="1"/>
        <end position="95"/>
    </location>
</feature>
<protein>
    <recommendedName>
        <fullName evidence="1">Co-chaperonin GroES</fullName>
    </recommendedName>
    <alternativeName>
        <fullName evidence="1">10 kDa chaperonin</fullName>
    </alternativeName>
    <alternativeName>
        <fullName evidence="1">Chaperonin-10</fullName>
        <shortName evidence="1">Cpn10</shortName>
    </alternativeName>
</protein>
<accession>B1IFD5</accession>
<comment type="function">
    <text evidence="1">Together with the chaperonin GroEL, plays an essential role in assisting protein folding. The GroEL-GroES system forms a nano-cage that allows encapsulation of the non-native substrate proteins and provides a physical environment optimized to promote and accelerate protein folding. GroES binds to the apical surface of the GroEL ring, thereby capping the opening of the GroEL channel.</text>
</comment>
<comment type="subunit">
    <text evidence="1">Heptamer of 7 subunits arranged in a ring. Interacts with the chaperonin GroEL.</text>
</comment>
<comment type="subcellular location">
    <subcellularLocation>
        <location evidence="1">Cytoplasm</location>
    </subcellularLocation>
</comment>
<comment type="similarity">
    <text evidence="1">Belongs to the GroES chaperonin family.</text>
</comment>